<gene>
    <name evidence="1" type="primary">udk</name>
    <name type="ordered locus">SAHV_1598</name>
</gene>
<proteinExistence type="inferred from homology"/>
<name>URK_STAA1</name>
<evidence type="ECO:0000255" key="1">
    <source>
        <dbReference type="HAMAP-Rule" id="MF_00551"/>
    </source>
</evidence>
<accession>A7X320</accession>
<organism>
    <name type="scientific">Staphylococcus aureus (strain Mu3 / ATCC 700698)</name>
    <dbReference type="NCBI Taxonomy" id="418127"/>
    <lineage>
        <taxon>Bacteria</taxon>
        <taxon>Bacillati</taxon>
        <taxon>Bacillota</taxon>
        <taxon>Bacilli</taxon>
        <taxon>Bacillales</taxon>
        <taxon>Staphylococcaceae</taxon>
        <taxon>Staphylococcus</taxon>
    </lineage>
</organism>
<protein>
    <recommendedName>
        <fullName evidence="1">Uridine kinase</fullName>
        <ecNumber evidence="1">2.7.1.48</ecNumber>
    </recommendedName>
    <alternativeName>
        <fullName evidence="1">Cytidine monophosphokinase</fullName>
    </alternativeName>
    <alternativeName>
        <fullName evidence="1">Uridine monophosphokinase</fullName>
    </alternativeName>
</protein>
<keyword id="KW-0067">ATP-binding</keyword>
<keyword id="KW-0963">Cytoplasm</keyword>
<keyword id="KW-0418">Kinase</keyword>
<keyword id="KW-0547">Nucleotide-binding</keyword>
<keyword id="KW-0808">Transferase</keyword>
<reference key="1">
    <citation type="journal article" date="2008" name="Antimicrob. Agents Chemother.">
        <title>Mutated response regulator graR is responsible for phenotypic conversion of Staphylococcus aureus from heterogeneous vancomycin-intermediate resistance to vancomycin-intermediate resistance.</title>
        <authorList>
            <person name="Neoh H.-M."/>
            <person name="Cui L."/>
            <person name="Yuzawa H."/>
            <person name="Takeuchi F."/>
            <person name="Matsuo M."/>
            <person name="Hiramatsu K."/>
        </authorList>
    </citation>
    <scope>NUCLEOTIDE SEQUENCE [LARGE SCALE GENOMIC DNA]</scope>
    <source>
        <strain>Mu3 / ATCC 700698</strain>
    </source>
</reference>
<feature type="chain" id="PRO_1000017901" description="Uridine kinase">
    <location>
        <begin position="1"/>
        <end position="207"/>
    </location>
</feature>
<feature type="binding site" evidence="1">
    <location>
        <begin position="11"/>
        <end position="18"/>
    </location>
    <ligand>
        <name>ATP</name>
        <dbReference type="ChEBI" id="CHEBI:30616"/>
    </ligand>
</feature>
<dbReference type="EC" id="2.7.1.48" evidence="1"/>
<dbReference type="EMBL" id="AP009324">
    <property type="protein sequence ID" value="BAF78481.1"/>
    <property type="molecule type" value="Genomic_DNA"/>
</dbReference>
<dbReference type="RefSeq" id="WP_000648617.1">
    <property type="nucleotide sequence ID" value="NZ_CTYB01000003.1"/>
</dbReference>
<dbReference type="SMR" id="A7X320"/>
<dbReference type="KEGG" id="saw:SAHV_1598"/>
<dbReference type="HOGENOM" id="CLU_021278_1_2_9"/>
<dbReference type="UniPathway" id="UPA00574">
    <property type="reaction ID" value="UER00637"/>
</dbReference>
<dbReference type="UniPathway" id="UPA00579">
    <property type="reaction ID" value="UER00640"/>
</dbReference>
<dbReference type="GO" id="GO:0005737">
    <property type="term" value="C:cytoplasm"/>
    <property type="evidence" value="ECO:0007669"/>
    <property type="project" value="UniProtKB-SubCell"/>
</dbReference>
<dbReference type="GO" id="GO:0005524">
    <property type="term" value="F:ATP binding"/>
    <property type="evidence" value="ECO:0007669"/>
    <property type="project" value="UniProtKB-UniRule"/>
</dbReference>
<dbReference type="GO" id="GO:0043771">
    <property type="term" value="F:cytidine kinase activity"/>
    <property type="evidence" value="ECO:0007669"/>
    <property type="project" value="RHEA"/>
</dbReference>
<dbReference type="GO" id="GO:0004849">
    <property type="term" value="F:uridine kinase activity"/>
    <property type="evidence" value="ECO:0007669"/>
    <property type="project" value="UniProtKB-UniRule"/>
</dbReference>
<dbReference type="GO" id="GO:0044211">
    <property type="term" value="P:CTP salvage"/>
    <property type="evidence" value="ECO:0007669"/>
    <property type="project" value="UniProtKB-UniRule"/>
</dbReference>
<dbReference type="GO" id="GO:0044206">
    <property type="term" value="P:UMP salvage"/>
    <property type="evidence" value="ECO:0007669"/>
    <property type="project" value="UniProtKB-UniRule"/>
</dbReference>
<dbReference type="CDD" id="cd02023">
    <property type="entry name" value="UMPK"/>
    <property type="match status" value="1"/>
</dbReference>
<dbReference type="Gene3D" id="3.40.50.300">
    <property type="entry name" value="P-loop containing nucleotide triphosphate hydrolases"/>
    <property type="match status" value="1"/>
</dbReference>
<dbReference type="HAMAP" id="MF_00551">
    <property type="entry name" value="Uridine_kinase"/>
    <property type="match status" value="1"/>
</dbReference>
<dbReference type="InterPro" id="IPR027417">
    <property type="entry name" value="P-loop_NTPase"/>
</dbReference>
<dbReference type="InterPro" id="IPR006083">
    <property type="entry name" value="PRK/URK"/>
</dbReference>
<dbReference type="InterPro" id="IPR026008">
    <property type="entry name" value="Uridine_kinase"/>
</dbReference>
<dbReference type="InterPro" id="IPR000764">
    <property type="entry name" value="Uridine_kinase-like"/>
</dbReference>
<dbReference type="NCBIfam" id="NF004018">
    <property type="entry name" value="PRK05480.1"/>
    <property type="match status" value="1"/>
</dbReference>
<dbReference type="NCBIfam" id="TIGR00235">
    <property type="entry name" value="udk"/>
    <property type="match status" value="1"/>
</dbReference>
<dbReference type="PANTHER" id="PTHR10285">
    <property type="entry name" value="URIDINE KINASE"/>
    <property type="match status" value="1"/>
</dbReference>
<dbReference type="Pfam" id="PF00485">
    <property type="entry name" value="PRK"/>
    <property type="match status" value="1"/>
</dbReference>
<dbReference type="PRINTS" id="PR00988">
    <property type="entry name" value="URIDINKINASE"/>
</dbReference>
<dbReference type="SUPFAM" id="SSF52540">
    <property type="entry name" value="P-loop containing nucleoside triphosphate hydrolases"/>
    <property type="match status" value="1"/>
</dbReference>
<sequence length="207" mass="23505">MKATTIIGIAGGSGSGKTTVTNEIMKNLEGHSVALLAQDYYYKDQKHLTFDERLETNYDHPFAFDNDLLIENLKDLKNGKAVEVPTYDYASHTRSDITIDFKPKDVIIVEGIFALENKVLRDMMDVKIYVDTDADLRILRRLTRDTKERGRSMDSVINQYLSVVRPMHDQFIEPTKKYADIIIPEGGSNKVAIDIMTTKIQSLVSKQ</sequence>
<comment type="catalytic activity">
    <reaction evidence="1">
        <text>uridine + ATP = UMP + ADP + H(+)</text>
        <dbReference type="Rhea" id="RHEA:16825"/>
        <dbReference type="ChEBI" id="CHEBI:15378"/>
        <dbReference type="ChEBI" id="CHEBI:16704"/>
        <dbReference type="ChEBI" id="CHEBI:30616"/>
        <dbReference type="ChEBI" id="CHEBI:57865"/>
        <dbReference type="ChEBI" id="CHEBI:456216"/>
        <dbReference type="EC" id="2.7.1.48"/>
    </reaction>
</comment>
<comment type="catalytic activity">
    <reaction evidence="1">
        <text>cytidine + ATP = CMP + ADP + H(+)</text>
        <dbReference type="Rhea" id="RHEA:24674"/>
        <dbReference type="ChEBI" id="CHEBI:15378"/>
        <dbReference type="ChEBI" id="CHEBI:17562"/>
        <dbReference type="ChEBI" id="CHEBI:30616"/>
        <dbReference type="ChEBI" id="CHEBI:60377"/>
        <dbReference type="ChEBI" id="CHEBI:456216"/>
        <dbReference type="EC" id="2.7.1.48"/>
    </reaction>
</comment>
<comment type="pathway">
    <text evidence="1">Pyrimidine metabolism; CTP biosynthesis via salvage pathway; CTP from cytidine: step 1/3.</text>
</comment>
<comment type="pathway">
    <text evidence="1">Pyrimidine metabolism; UMP biosynthesis via salvage pathway; UMP from uridine: step 1/1.</text>
</comment>
<comment type="subcellular location">
    <subcellularLocation>
        <location evidence="1">Cytoplasm</location>
    </subcellularLocation>
</comment>
<comment type="similarity">
    <text evidence="1">Belongs to the uridine kinase family.</text>
</comment>